<gene>
    <name evidence="1" type="primary">thiG</name>
    <name type="ordered locus">FP0432</name>
</gene>
<feature type="chain" id="PRO_1000196865" description="Thiazole synthase">
    <location>
        <begin position="1"/>
        <end position="256"/>
    </location>
</feature>
<feature type="active site" description="Schiff-base intermediate with DXP" evidence="1">
    <location>
        <position position="97"/>
    </location>
</feature>
<feature type="binding site" evidence="1">
    <location>
        <position position="158"/>
    </location>
    <ligand>
        <name>1-deoxy-D-xylulose 5-phosphate</name>
        <dbReference type="ChEBI" id="CHEBI:57792"/>
    </ligand>
</feature>
<feature type="binding site" evidence="1">
    <location>
        <begin position="184"/>
        <end position="185"/>
    </location>
    <ligand>
        <name>1-deoxy-D-xylulose 5-phosphate</name>
        <dbReference type="ChEBI" id="CHEBI:57792"/>
    </ligand>
</feature>
<feature type="binding site" evidence="1">
    <location>
        <begin position="206"/>
        <end position="207"/>
    </location>
    <ligand>
        <name>1-deoxy-D-xylulose 5-phosphate</name>
        <dbReference type="ChEBI" id="CHEBI:57792"/>
    </ligand>
</feature>
<organism>
    <name type="scientific">Flavobacterium psychrophilum (strain ATCC 49511 / DSM 21280 / CIP 103535 / JIP02/86)</name>
    <dbReference type="NCBI Taxonomy" id="402612"/>
    <lineage>
        <taxon>Bacteria</taxon>
        <taxon>Pseudomonadati</taxon>
        <taxon>Bacteroidota</taxon>
        <taxon>Flavobacteriia</taxon>
        <taxon>Flavobacteriales</taxon>
        <taxon>Flavobacteriaceae</taxon>
        <taxon>Flavobacterium</taxon>
    </lineage>
</organism>
<comment type="function">
    <text evidence="1">Catalyzes the rearrangement of 1-deoxy-D-xylulose 5-phosphate (DXP) to produce the thiazole phosphate moiety of thiamine. Sulfur is provided by the thiocarboxylate moiety of the carrier protein ThiS. In vitro, sulfur can be provided by H(2)S.</text>
</comment>
<comment type="catalytic activity">
    <reaction evidence="1">
        <text>[ThiS sulfur-carrier protein]-C-terminal-Gly-aminoethanethioate + 2-iminoacetate + 1-deoxy-D-xylulose 5-phosphate = [ThiS sulfur-carrier protein]-C-terminal Gly-Gly + 2-[(2R,5Z)-2-carboxy-4-methylthiazol-5(2H)-ylidene]ethyl phosphate + 2 H2O + H(+)</text>
        <dbReference type="Rhea" id="RHEA:26297"/>
        <dbReference type="Rhea" id="RHEA-COMP:12909"/>
        <dbReference type="Rhea" id="RHEA-COMP:19908"/>
        <dbReference type="ChEBI" id="CHEBI:15377"/>
        <dbReference type="ChEBI" id="CHEBI:15378"/>
        <dbReference type="ChEBI" id="CHEBI:57792"/>
        <dbReference type="ChEBI" id="CHEBI:62899"/>
        <dbReference type="ChEBI" id="CHEBI:77846"/>
        <dbReference type="ChEBI" id="CHEBI:90778"/>
        <dbReference type="ChEBI" id="CHEBI:232372"/>
        <dbReference type="EC" id="2.8.1.10"/>
    </reaction>
</comment>
<comment type="pathway">
    <text evidence="1">Cofactor biosynthesis; thiamine diphosphate biosynthesis.</text>
</comment>
<comment type="subunit">
    <text evidence="1">Homotetramer. Forms heterodimers with either ThiH or ThiS.</text>
</comment>
<comment type="subcellular location">
    <subcellularLocation>
        <location evidence="1">Cytoplasm</location>
    </subcellularLocation>
</comment>
<comment type="similarity">
    <text evidence="1">Belongs to the ThiG family.</text>
</comment>
<proteinExistence type="inferred from homology"/>
<keyword id="KW-0963">Cytoplasm</keyword>
<keyword id="KW-1185">Reference proteome</keyword>
<keyword id="KW-0704">Schiff base</keyword>
<keyword id="KW-0784">Thiamine biosynthesis</keyword>
<keyword id="KW-0808">Transferase</keyword>
<reference key="1">
    <citation type="journal article" date="2007" name="Nat. Biotechnol.">
        <title>Complete genome sequence of the fish pathogen Flavobacterium psychrophilum.</title>
        <authorList>
            <person name="Duchaud E."/>
            <person name="Boussaha M."/>
            <person name="Loux V."/>
            <person name="Bernardet J.-F."/>
            <person name="Michel C."/>
            <person name="Kerouault B."/>
            <person name="Mondot S."/>
            <person name="Nicolas P."/>
            <person name="Bossy R."/>
            <person name="Caron C."/>
            <person name="Bessieres P."/>
            <person name="Gibrat J.-F."/>
            <person name="Claverol S."/>
            <person name="Dumetz F."/>
            <person name="Le Henaff M."/>
            <person name="Benmansour A."/>
        </authorList>
    </citation>
    <scope>NUCLEOTIDE SEQUENCE [LARGE SCALE GENOMIC DNA]</scope>
    <source>
        <strain>ATCC 49511 / DSM 21280 / CIP 103535 / JIP02/86</strain>
    </source>
</reference>
<protein>
    <recommendedName>
        <fullName evidence="1">Thiazole synthase</fullName>
        <ecNumber evidence="1">2.8.1.10</ecNumber>
    </recommendedName>
</protein>
<dbReference type="EC" id="2.8.1.10" evidence="1"/>
<dbReference type="EMBL" id="AM398681">
    <property type="protein sequence ID" value="CAL42543.1"/>
    <property type="molecule type" value="Genomic_DNA"/>
</dbReference>
<dbReference type="RefSeq" id="WP_011962601.1">
    <property type="nucleotide sequence ID" value="NC_009613.3"/>
</dbReference>
<dbReference type="RefSeq" id="YP_001295361.1">
    <property type="nucleotide sequence ID" value="NC_009613.3"/>
</dbReference>
<dbReference type="SMR" id="A6GWS0"/>
<dbReference type="STRING" id="402612.FP0432"/>
<dbReference type="EnsemblBacteria" id="CAL42543">
    <property type="protein sequence ID" value="CAL42543"/>
    <property type="gene ID" value="FP0432"/>
</dbReference>
<dbReference type="KEGG" id="fps:FP0432"/>
<dbReference type="PATRIC" id="fig|402612.5.peg.446"/>
<dbReference type="eggNOG" id="COG2022">
    <property type="taxonomic scope" value="Bacteria"/>
</dbReference>
<dbReference type="HOGENOM" id="CLU_062233_1_0_10"/>
<dbReference type="OrthoDB" id="9805935at2"/>
<dbReference type="UniPathway" id="UPA00060"/>
<dbReference type="Proteomes" id="UP000006394">
    <property type="component" value="Chromosome"/>
</dbReference>
<dbReference type="GO" id="GO:0005737">
    <property type="term" value="C:cytoplasm"/>
    <property type="evidence" value="ECO:0007669"/>
    <property type="project" value="UniProtKB-SubCell"/>
</dbReference>
<dbReference type="GO" id="GO:1990107">
    <property type="term" value="F:thiazole synthase activity"/>
    <property type="evidence" value="ECO:0007669"/>
    <property type="project" value="UniProtKB-EC"/>
</dbReference>
<dbReference type="GO" id="GO:0009229">
    <property type="term" value="P:thiamine diphosphate biosynthetic process"/>
    <property type="evidence" value="ECO:0007669"/>
    <property type="project" value="UniProtKB-UniRule"/>
</dbReference>
<dbReference type="CDD" id="cd04728">
    <property type="entry name" value="ThiG"/>
    <property type="match status" value="1"/>
</dbReference>
<dbReference type="FunFam" id="3.20.20.70:FF:000049">
    <property type="entry name" value="Thiazole synthase"/>
    <property type="match status" value="1"/>
</dbReference>
<dbReference type="Gene3D" id="3.20.20.70">
    <property type="entry name" value="Aldolase class I"/>
    <property type="match status" value="1"/>
</dbReference>
<dbReference type="HAMAP" id="MF_00443">
    <property type="entry name" value="ThiG"/>
    <property type="match status" value="1"/>
</dbReference>
<dbReference type="InterPro" id="IPR013785">
    <property type="entry name" value="Aldolase_TIM"/>
</dbReference>
<dbReference type="InterPro" id="IPR033983">
    <property type="entry name" value="Thiazole_synthase_ThiG"/>
</dbReference>
<dbReference type="InterPro" id="IPR008867">
    <property type="entry name" value="ThiG"/>
</dbReference>
<dbReference type="PANTHER" id="PTHR34266">
    <property type="entry name" value="THIAZOLE SYNTHASE"/>
    <property type="match status" value="1"/>
</dbReference>
<dbReference type="PANTHER" id="PTHR34266:SF2">
    <property type="entry name" value="THIAZOLE SYNTHASE"/>
    <property type="match status" value="1"/>
</dbReference>
<dbReference type="Pfam" id="PF05690">
    <property type="entry name" value="ThiG"/>
    <property type="match status" value="1"/>
</dbReference>
<dbReference type="SUPFAM" id="SSF110399">
    <property type="entry name" value="ThiG-like"/>
    <property type="match status" value="1"/>
</dbReference>
<accession>A6GWS0</accession>
<name>THIG_FLAPJ</name>
<sequence>MLSFKIRDKTFESRLFLGTGKFGSNQQMEEAILASGSELVTVALKRIDLETQTDAILAHLKHPRINLLPNTSGARNAKEAIFAAQLAREALETNWLKLEIHPDPKYLMPDAIETLKATEELAKLGFIILPYIHADPVLCKRLEEAGTSAVMPLGSPIGSNKGLKTIDFLEIIIEQSKVPVIIDAGIGAPSDAAKAMELGADAVLVNTAIAIAGNPKLMAEAFKEAVMAGRKAYEAKLAQKASQAVASSPLTAFLYE</sequence>
<evidence type="ECO:0000255" key="1">
    <source>
        <dbReference type="HAMAP-Rule" id="MF_00443"/>
    </source>
</evidence>